<dbReference type="EC" id="3.6.1.15" evidence="2"/>
<dbReference type="EC" id="3.6.4.13" evidence="2"/>
<dbReference type="EMBL" id="AJ250027">
    <property type="protein sequence ID" value="CAB86201.1"/>
    <property type="molecule type" value="mRNA"/>
</dbReference>
<dbReference type="EMBL" id="AF220454">
    <property type="protein sequence ID" value="AAF76301.1"/>
    <property type="molecule type" value="mRNA"/>
</dbReference>
<dbReference type="EMBL" id="CH466608">
    <property type="protein sequence ID" value="EDL07549.1"/>
    <property type="molecule type" value="Genomic_DNA"/>
</dbReference>
<dbReference type="EMBL" id="BC125471">
    <property type="protein sequence ID" value="AAI25472.1"/>
    <property type="molecule type" value="mRNA"/>
</dbReference>
<dbReference type="EMBL" id="BC137721">
    <property type="protein sequence ID" value="AAI37722.1"/>
    <property type="molecule type" value="mRNA"/>
</dbReference>
<dbReference type="CCDS" id="CCDS38581.1"/>
<dbReference type="RefSeq" id="NP_059093.3">
    <property type="nucleotide sequence ID" value="NM_017397.3"/>
</dbReference>
<dbReference type="RefSeq" id="XP_006501764.1">
    <property type="nucleotide sequence ID" value="XM_006501701.4"/>
</dbReference>
<dbReference type="SMR" id="Q9JJY4"/>
<dbReference type="BioGRID" id="207545">
    <property type="interactions" value="12"/>
</dbReference>
<dbReference type="FunCoup" id="Q9JJY4">
    <property type="interactions" value="2092"/>
</dbReference>
<dbReference type="IntAct" id="Q9JJY4">
    <property type="interactions" value="2"/>
</dbReference>
<dbReference type="MINT" id="Q9JJY4"/>
<dbReference type="STRING" id="10090.ENSMUSP00000088176"/>
<dbReference type="GlyGen" id="Q9JJY4">
    <property type="glycosylation" value="2 sites, 1 O-linked glycan (1 site)"/>
</dbReference>
<dbReference type="iPTMnet" id="Q9JJY4"/>
<dbReference type="PhosphoSitePlus" id="Q9JJY4"/>
<dbReference type="jPOST" id="Q9JJY4"/>
<dbReference type="PaxDb" id="10090-ENSMUSP00000088176"/>
<dbReference type="PeptideAtlas" id="Q9JJY4"/>
<dbReference type="ProteomicsDB" id="279323"/>
<dbReference type="Pumba" id="Q9JJY4"/>
<dbReference type="Antibodypedia" id="1125">
    <property type="antibodies" value="357 antibodies from 36 providers"/>
</dbReference>
<dbReference type="DNASU" id="53975"/>
<dbReference type="Ensembl" id="ENSMUST00000090680.11">
    <property type="protein sequence ID" value="ENSMUSP00000088176.7"/>
    <property type="gene ID" value="ENSMUSG00000027905.16"/>
</dbReference>
<dbReference type="GeneID" id="53975"/>
<dbReference type="KEGG" id="mmu:53975"/>
<dbReference type="UCSC" id="uc008qva.1">
    <property type="organism name" value="mouse"/>
</dbReference>
<dbReference type="AGR" id="MGI:1858415"/>
<dbReference type="CTD" id="11218"/>
<dbReference type="MGI" id="MGI:1858415">
    <property type="gene designation" value="Ddx20"/>
</dbReference>
<dbReference type="VEuPathDB" id="HostDB:ENSMUSG00000027905"/>
<dbReference type="eggNOG" id="KOG4284">
    <property type="taxonomic scope" value="Eukaryota"/>
</dbReference>
<dbReference type="GeneTree" id="ENSGT00940000158400"/>
<dbReference type="HOGENOM" id="CLU_019966_0_0_1"/>
<dbReference type="InParanoid" id="Q9JJY4"/>
<dbReference type="OMA" id="FQTQKAH"/>
<dbReference type="OrthoDB" id="434041at2759"/>
<dbReference type="PhylomeDB" id="Q9JJY4"/>
<dbReference type="TreeFam" id="TF101524"/>
<dbReference type="Reactome" id="R-MMU-191859">
    <property type="pathway name" value="snRNP Assembly"/>
</dbReference>
<dbReference type="BioGRID-ORCS" id="53975">
    <property type="hits" value="26 hits in 78 CRISPR screens"/>
</dbReference>
<dbReference type="ChiTaRS" id="Ddx20">
    <property type="organism name" value="mouse"/>
</dbReference>
<dbReference type="PRO" id="PR:Q9JJY4"/>
<dbReference type="Proteomes" id="UP000000589">
    <property type="component" value="Chromosome 3"/>
</dbReference>
<dbReference type="RNAct" id="Q9JJY4">
    <property type="molecule type" value="protein"/>
</dbReference>
<dbReference type="Bgee" id="ENSMUSG00000027905">
    <property type="expression patterns" value="Expressed in otic placode and 256 other cell types or tissues"/>
</dbReference>
<dbReference type="ExpressionAtlas" id="Q9JJY4">
    <property type="expression patterns" value="baseline and differential"/>
</dbReference>
<dbReference type="GO" id="GO:0005829">
    <property type="term" value="C:cytosol"/>
    <property type="evidence" value="ECO:0000250"/>
    <property type="project" value="UniProtKB"/>
</dbReference>
<dbReference type="GO" id="GO:0097504">
    <property type="term" value="C:Gemini of Cajal bodies"/>
    <property type="evidence" value="ECO:0007669"/>
    <property type="project" value="UniProtKB-SubCell"/>
</dbReference>
<dbReference type="GO" id="GO:0090571">
    <property type="term" value="C:RNA polymerase II transcription repressor complex"/>
    <property type="evidence" value="ECO:0000314"/>
    <property type="project" value="BHF-UCL"/>
</dbReference>
<dbReference type="GO" id="GO:0032797">
    <property type="term" value="C:SMN complex"/>
    <property type="evidence" value="ECO:0000250"/>
    <property type="project" value="UniProtKB"/>
</dbReference>
<dbReference type="GO" id="GO:0034719">
    <property type="term" value="C:SMN-Sm protein complex"/>
    <property type="evidence" value="ECO:0000250"/>
    <property type="project" value="UniProtKB"/>
</dbReference>
<dbReference type="GO" id="GO:0017053">
    <property type="term" value="C:transcription repressor complex"/>
    <property type="evidence" value="ECO:0000314"/>
    <property type="project" value="MGI"/>
</dbReference>
<dbReference type="GO" id="GO:0005524">
    <property type="term" value="F:ATP binding"/>
    <property type="evidence" value="ECO:0007669"/>
    <property type="project" value="UniProtKB-KW"/>
</dbReference>
<dbReference type="GO" id="GO:0016887">
    <property type="term" value="F:ATP hydrolysis activity"/>
    <property type="evidence" value="ECO:0007669"/>
    <property type="project" value="RHEA"/>
</dbReference>
<dbReference type="GO" id="GO:0003677">
    <property type="term" value="F:DNA binding"/>
    <property type="evidence" value="ECO:0007669"/>
    <property type="project" value="UniProtKB-KW"/>
</dbReference>
<dbReference type="GO" id="GO:0140297">
    <property type="term" value="F:DNA-binding transcription factor binding"/>
    <property type="evidence" value="ECO:0007669"/>
    <property type="project" value="Ensembl"/>
</dbReference>
<dbReference type="GO" id="GO:0042826">
    <property type="term" value="F:histone deacetylase binding"/>
    <property type="evidence" value="ECO:0000353"/>
    <property type="project" value="BHF-UCL"/>
</dbReference>
<dbReference type="GO" id="GO:0019904">
    <property type="term" value="F:protein domain specific binding"/>
    <property type="evidence" value="ECO:0007669"/>
    <property type="project" value="Ensembl"/>
</dbReference>
<dbReference type="GO" id="GO:0030674">
    <property type="term" value="F:protein-macromolecule adaptor activity"/>
    <property type="evidence" value="ECO:0000314"/>
    <property type="project" value="BHF-UCL"/>
</dbReference>
<dbReference type="GO" id="GO:0003724">
    <property type="term" value="F:RNA helicase activity"/>
    <property type="evidence" value="ECO:0007669"/>
    <property type="project" value="UniProtKB-EC"/>
</dbReference>
<dbReference type="GO" id="GO:0008285">
    <property type="term" value="P:negative regulation of cell population proliferation"/>
    <property type="evidence" value="ECO:0007669"/>
    <property type="project" value="Ensembl"/>
</dbReference>
<dbReference type="GO" id="GO:0000122">
    <property type="term" value="P:negative regulation of transcription by RNA polymerase II"/>
    <property type="evidence" value="ECO:0000314"/>
    <property type="project" value="MGI"/>
</dbReference>
<dbReference type="GO" id="GO:0048477">
    <property type="term" value="P:oogenesis"/>
    <property type="evidence" value="ECO:0000315"/>
    <property type="project" value="MGI"/>
</dbReference>
<dbReference type="GO" id="GO:0043065">
    <property type="term" value="P:positive regulation of apoptotic process"/>
    <property type="evidence" value="ECO:0000315"/>
    <property type="project" value="UniProtKB"/>
</dbReference>
<dbReference type="GO" id="GO:0050810">
    <property type="term" value="P:regulation of steroid biosynthetic process"/>
    <property type="evidence" value="ECO:0000315"/>
    <property type="project" value="MGI"/>
</dbReference>
<dbReference type="GO" id="GO:0000387">
    <property type="term" value="P:spliceosomal snRNP assembly"/>
    <property type="evidence" value="ECO:0000250"/>
    <property type="project" value="UniProtKB"/>
</dbReference>
<dbReference type="CDD" id="cd17943">
    <property type="entry name" value="DEADc_DDX20"/>
    <property type="match status" value="1"/>
</dbReference>
<dbReference type="CDD" id="cd18787">
    <property type="entry name" value="SF2_C_DEAD"/>
    <property type="match status" value="1"/>
</dbReference>
<dbReference type="FunFam" id="3.40.50.300:FF:001021">
    <property type="entry name" value="Probable ATP-dependent RNA helicase DDX20"/>
    <property type="match status" value="1"/>
</dbReference>
<dbReference type="FunFam" id="3.40.50.300:FF:000992">
    <property type="entry name" value="probable ATP-dependent RNA helicase DDX20"/>
    <property type="match status" value="1"/>
</dbReference>
<dbReference type="Gene3D" id="3.40.50.300">
    <property type="entry name" value="P-loop containing nucleotide triphosphate hydrolases"/>
    <property type="match status" value="2"/>
</dbReference>
<dbReference type="InterPro" id="IPR011545">
    <property type="entry name" value="DEAD/DEAH_box_helicase_dom"/>
</dbReference>
<dbReference type="InterPro" id="IPR014001">
    <property type="entry name" value="Helicase_ATP-bd"/>
</dbReference>
<dbReference type="InterPro" id="IPR001650">
    <property type="entry name" value="Helicase_C-like"/>
</dbReference>
<dbReference type="InterPro" id="IPR027417">
    <property type="entry name" value="P-loop_NTPase"/>
</dbReference>
<dbReference type="InterPro" id="IPR000629">
    <property type="entry name" value="RNA-helicase_DEAD-box_CS"/>
</dbReference>
<dbReference type="InterPro" id="IPR014014">
    <property type="entry name" value="RNA_helicase_DEAD_Q_motif"/>
</dbReference>
<dbReference type="PANTHER" id="PTHR47958">
    <property type="entry name" value="ATP-DEPENDENT RNA HELICASE DBP3"/>
    <property type="match status" value="1"/>
</dbReference>
<dbReference type="Pfam" id="PF00270">
    <property type="entry name" value="DEAD"/>
    <property type="match status" value="1"/>
</dbReference>
<dbReference type="Pfam" id="PF00271">
    <property type="entry name" value="Helicase_C"/>
    <property type="match status" value="1"/>
</dbReference>
<dbReference type="SMART" id="SM00487">
    <property type="entry name" value="DEXDc"/>
    <property type="match status" value="1"/>
</dbReference>
<dbReference type="SMART" id="SM00490">
    <property type="entry name" value="HELICc"/>
    <property type="match status" value="1"/>
</dbReference>
<dbReference type="SUPFAM" id="SSF52540">
    <property type="entry name" value="P-loop containing nucleoside triphosphate hydrolases"/>
    <property type="match status" value="1"/>
</dbReference>
<dbReference type="PROSITE" id="PS00039">
    <property type="entry name" value="DEAD_ATP_HELICASE"/>
    <property type="match status" value="1"/>
</dbReference>
<dbReference type="PROSITE" id="PS51192">
    <property type="entry name" value="HELICASE_ATP_BIND_1"/>
    <property type="match status" value="1"/>
</dbReference>
<dbReference type="PROSITE" id="PS51194">
    <property type="entry name" value="HELICASE_CTER"/>
    <property type="match status" value="1"/>
</dbReference>
<dbReference type="PROSITE" id="PS51195">
    <property type="entry name" value="Q_MOTIF"/>
    <property type="match status" value="1"/>
</dbReference>
<name>DDX20_MOUSE</name>
<protein>
    <recommendedName>
        <fullName>Probable ATP-dependent RNA helicase DDX20</fullName>
        <ecNumber evidence="2">3.6.1.15</ecNumber>
        <ecNumber evidence="2">3.6.4.13</ecNumber>
    </recommendedName>
    <alternativeName>
        <fullName>Component of gems 3</fullName>
    </alternativeName>
    <alternativeName>
        <fullName>DEAD box protein 20</fullName>
    </alternativeName>
    <alternativeName>
        <fullName>DEAD box protein DP 103</fullName>
    </alternativeName>
    <alternativeName>
        <fullName>Gemin-3</fullName>
    </alternativeName>
    <alternativeName>
        <fullName>Regulator of steroidogenic factor 1</fullName>
        <shortName>ROSF-1</shortName>
    </alternativeName>
</protein>
<keyword id="KW-0067">ATP-binding</keyword>
<keyword id="KW-0963">Cytoplasm</keyword>
<keyword id="KW-0238">DNA-binding</keyword>
<keyword id="KW-0347">Helicase</keyword>
<keyword id="KW-0378">Hydrolase</keyword>
<keyword id="KW-0507">mRNA processing</keyword>
<keyword id="KW-0508">mRNA splicing</keyword>
<keyword id="KW-0547">Nucleotide-binding</keyword>
<keyword id="KW-0539">Nucleus</keyword>
<keyword id="KW-0597">Phosphoprotein</keyword>
<keyword id="KW-1185">Reference proteome</keyword>
<accession>Q9JJY4</accession>
<accession>Q059Z6</accession>
<accession>Q9JIK4</accession>
<evidence type="ECO:0000250" key="1"/>
<evidence type="ECO:0000250" key="2">
    <source>
        <dbReference type="UniProtKB" id="Q9UHI6"/>
    </source>
</evidence>
<evidence type="ECO:0000255" key="3">
    <source>
        <dbReference type="PROSITE-ProRule" id="PRU00541"/>
    </source>
</evidence>
<evidence type="ECO:0000255" key="4">
    <source>
        <dbReference type="PROSITE-ProRule" id="PRU00542"/>
    </source>
</evidence>
<evidence type="ECO:0000256" key="5">
    <source>
        <dbReference type="SAM" id="MobiDB-lite"/>
    </source>
</evidence>
<evidence type="ECO:0000269" key="6">
    <source>
    </source>
</evidence>
<evidence type="ECO:0000269" key="7">
    <source>
    </source>
</evidence>
<evidence type="ECO:0000305" key="8"/>
<evidence type="ECO:0007744" key="9">
    <source>
    </source>
</evidence>
<comment type="function">
    <text evidence="2">The SMN complex catalyzes the assembly of small nuclear ribonucleoproteins (snRNPs), the building blocks of the spliceosome, and thereby plays an important role in the splicing of cellular pre-mRNAs. Most spliceosomal snRNPs contain a common set of Sm proteins SNRPB, SNRPD1, SNRPD2, SNRPD3, SNRPE, SNRPF and SNRPG that assemble in a heptameric protein ring on the Sm site of the small nuclear RNA to form the core snRNP (Sm core). In the cytosol, the Sm proteins SNRPD1, SNRPD2, SNRPE, SNRPF and SNRPG are trapped in an inactive 6S pICln-Sm complex by the chaperone CLNS1A that controls the assembly of the core snRNP. To assemble core snRNPs, the SMN complex accepts the trapped 5Sm proteins from CLNS1A forming an intermediate. Binding of snRNA inside 5Sm triggers eviction of the SMN complex, thereby allowing binding of SNRPD3 and SNRPB to complete assembly of the core snRNP. May also play a role in the metabolism of small nucleolar ribonucleoprotein (snoRNPs) (By similarity).</text>
</comment>
<comment type="catalytic activity">
    <reaction evidence="2">
        <text>ATP + H2O = ADP + phosphate + H(+)</text>
        <dbReference type="Rhea" id="RHEA:13065"/>
        <dbReference type="ChEBI" id="CHEBI:15377"/>
        <dbReference type="ChEBI" id="CHEBI:15378"/>
        <dbReference type="ChEBI" id="CHEBI:30616"/>
        <dbReference type="ChEBI" id="CHEBI:43474"/>
        <dbReference type="ChEBI" id="CHEBI:456216"/>
        <dbReference type="EC" id="3.6.4.13"/>
    </reaction>
    <physiologicalReaction direction="left-to-right" evidence="2">
        <dbReference type="Rhea" id="RHEA:13066"/>
    </physiologicalReaction>
</comment>
<comment type="catalytic activity">
    <reaction evidence="2">
        <text>a ribonucleoside 5'-triphosphate + H2O = a ribonucleoside 5'-diphosphate + phosphate + H(+)</text>
        <dbReference type="Rhea" id="RHEA:23680"/>
        <dbReference type="ChEBI" id="CHEBI:15377"/>
        <dbReference type="ChEBI" id="CHEBI:15378"/>
        <dbReference type="ChEBI" id="CHEBI:43474"/>
        <dbReference type="ChEBI" id="CHEBI:57930"/>
        <dbReference type="ChEBI" id="CHEBI:61557"/>
        <dbReference type="EC" id="3.6.1.15"/>
    </reaction>
    <physiologicalReaction direction="left-to-right" evidence="2">
        <dbReference type="Rhea" id="RHEA:23681"/>
    </physiologicalReaction>
</comment>
<comment type="subunit">
    <text evidence="2 6 7">Part of the core SMN complex that contains SMN1, GEMIN2/SIP1, DDX20/GEMIN3, GEMIN4, GEMIN5, GEMIN6, GEMIN7, GEMIN8 and STRAP/UNRIP (By similarity). Part of the SMN-Sm complex that contains SMN1, GEMIN2/SIP1, DDX20/GEMIN3, GEMIN4, GEMIN5, GEMIN6, GEMIN7, GEMIN8, STRAP/UNRIP and the Sm proteins SNRPB, SNRPD1, SNRPD2, SNRPD3, SNRPE, SNRPF and SNRPG (By similarity). Interacts with SMN1; the interaction is direct (PubMed:10767334). Interacts with GEMIN4; the interaction is direct (By similarity). Interacts with GEMIN5 (By similarity). Interacts with SNUPN; the interaction is direct (By similarity). Interacts with PPP4R2 (By similarity). Interacts with FOXL2 (PubMed:16153597). Interacts with NANOS1 and PUM2 (By similarity).</text>
</comment>
<comment type="subcellular location">
    <subcellularLocation>
        <location evidence="2">Cytoplasm</location>
    </subcellularLocation>
    <subcellularLocation>
        <location evidence="2">Nucleus</location>
        <location evidence="2">Gem</location>
    </subcellularLocation>
    <text evidence="2">Localized in subnuclear structures next to coiled bodies, called Gemini of Cajal bodies (Gems).</text>
</comment>
<comment type="similarity">
    <text evidence="8">Belongs to the DEAD box helicase family. DDX20 subfamily.</text>
</comment>
<proteinExistence type="evidence at protein level"/>
<feature type="chain" id="PRO_0000055026" description="Probable ATP-dependent RNA helicase DDX20">
    <location>
        <begin position="1"/>
        <end position="825"/>
    </location>
</feature>
<feature type="domain" description="Helicase ATP-binding" evidence="3">
    <location>
        <begin position="94"/>
        <end position="265"/>
    </location>
</feature>
<feature type="domain" description="Helicase C-terminal" evidence="4">
    <location>
        <begin position="300"/>
        <end position="449"/>
    </location>
</feature>
<feature type="region of interest" description="Disordered" evidence="5">
    <location>
        <begin position="27"/>
        <end position="50"/>
    </location>
</feature>
<feature type="region of interest" description="Disordered" evidence="5">
    <location>
        <begin position="465"/>
        <end position="573"/>
    </location>
</feature>
<feature type="region of interest" description="Disordered" evidence="5">
    <location>
        <begin position="642"/>
        <end position="753"/>
    </location>
</feature>
<feature type="short sequence motif" description="Q motif">
    <location>
        <begin position="63"/>
        <end position="91"/>
    </location>
</feature>
<feature type="short sequence motif" description="DEAD box">
    <location>
        <begin position="212"/>
        <end position="215"/>
    </location>
</feature>
<feature type="compositionally biased region" description="Polar residues" evidence="5">
    <location>
        <begin position="465"/>
        <end position="475"/>
    </location>
</feature>
<feature type="compositionally biased region" description="Polar residues" evidence="5">
    <location>
        <begin position="484"/>
        <end position="504"/>
    </location>
</feature>
<feature type="compositionally biased region" description="Basic residues" evidence="5">
    <location>
        <begin position="508"/>
        <end position="518"/>
    </location>
</feature>
<feature type="compositionally biased region" description="Polar residues" evidence="5">
    <location>
        <begin position="547"/>
        <end position="571"/>
    </location>
</feature>
<feature type="compositionally biased region" description="Low complexity" evidence="5">
    <location>
        <begin position="646"/>
        <end position="668"/>
    </location>
</feature>
<feature type="compositionally biased region" description="Polar residues" evidence="5">
    <location>
        <begin position="698"/>
        <end position="711"/>
    </location>
</feature>
<feature type="compositionally biased region" description="Basic residues" evidence="5">
    <location>
        <begin position="733"/>
        <end position="744"/>
    </location>
</feature>
<feature type="binding site" evidence="1">
    <location>
        <position position="85"/>
    </location>
    <ligand>
        <name>ATP</name>
        <dbReference type="ChEBI" id="CHEBI:30616"/>
    </ligand>
</feature>
<feature type="binding site" evidence="1">
    <location>
        <position position="90"/>
    </location>
    <ligand>
        <name>ATP</name>
        <dbReference type="ChEBI" id="CHEBI:30616"/>
    </ligand>
</feature>
<feature type="binding site" evidence="3">
    <location>
        <begin position="107"/>
        <end position="114"/>
    </location>
    <ligand>
        <name>ATP</name>
        <dbReference type="ChEBI" id="CHEBI:30616"/>
    </ligand>
</feature>
<feature type="binding site" evidence="3">
    <location>
        <begin position="110"/>
        <end position="115"/>
    </location>
    <ligand>
        <name>ATP</name>
        <dbReference type="ChEBI" id="CHEBI:30616"/>
    </ligand>
</feature>
<feature type="modified residue" description="Phosphoserine" evidence="2">
    <location>
        <position position="188"/>
    </location>
</feature>
<feature type="modified residue" description="Phosphoserine" evidence="2">
    <location>
        <position position="270"/>
    </location>
</feature>
<feature type="modified residue" description="Phosphoserine" evidence="9">
    <location>
        <position position="472"/>
    </location>
</feature>
<feature type="modified residue" description="Phosphoserine" evidence="2">
    <location>
        <position position="501"/>
    </location>
</feature>
<feature type="modified residue" description="Phosphoserine" evidence="2">
    <location>
        <position position="506"/>
    </location>
</feature>
<feature type="modified residue" description="Phosphothreonine" evidence="2">
    <location>
        <position position="552"/>
    </location>
</feature>
<feature type="modified residue" description="Phosphoserine" evidence="2">
    <location>
        <position position="561"/>
    </location>
</feature>
<feature type="modified residue" description="Phosphoserine" evidence="2">
    <location>
        <position position="653"/>
    </location>
</feature>
<feature type="modified residue" description="Phosphoserine" evidence="2">
    <location>
        <position position="655"/>
    </location>
</feature>
<feature type="modified residue" description="Phosphoserine" evidence="2">
    <location>
        <position position="657"/>
    </location>
</feature>
<feature type="modified residue" description="Phosphoserine" evidence="2">
    <location>
        <position position="673"/>
    </location>
</feature>
<feature type="modified residue" description="Phosphoserine" evidence="2">
    <location>
        <position position="678"/>
    </location>
</feature>
<feature type="modified residue" description="Phosphoserine" evidence="2">
    <location>
        <position position="679"/>
    </location>
</feature>
<feature type="modified residue" description="Phosphothreonine" evidence="2">
    <location>
        <position position="689"/>
    </location>
</feature>
<feature type="modified residue" description="Phosphothreonine" evidence="2">
    <location>
        <position position="706"/>
    </location>
</feature>
<feature type="sequence conflict" description="In Ref. 2; AAF76301." evidence="8" ref="2">
    <original>A</original>
    <variation>T</variation>
    <location>
        <position position="5"/>
    </location>
</feature>
<feature type="sequence conflict" description="In Ref. 2; AAF76301." evidence="8" ref="2">
    <original>P</original>
    <variation>R</variation>
    <location>
        <position position="9"/>
    </location>
</feature>
<feature type="sequence conflict" description="In Ref. 1; CAB86201." evidence="8" ref="1">
    <original>Q</original>
    <variation>H</variation>
    <location>
        <position position="226"/>
    </location>
</feature>
<feature type="sequence conflict" description="In Ref. 2; AAF76301." evidence="8" ref="2">
    <original>V</original>
    <variation>I</variation>
    <location>
        <position position="468"/>
    </location>
</feature>
<reference key="1">
    <citation type="journal article" date="2000" name="Hum. Mol. Genet.">
        <title>Direct interaction of Smn with dp103, a putative RNA helicase: a role for Smn in transcription regulation?</title>
        <authorList>
            <person name="Campbell L."/>
            <person name="Hunter K.M."/>
            <person name="Mohaghegh P."/>
            <person name="Tinsley J.M."/>
            <person name="Brasch M.A."/>
            <person name="Davies K.E."/>
        </authorList>
    </citation>
    <scope>NUCLEOTIDE SEQUENCE [MRNA]</scope>
    <scope>INTERACTION WITH SMN1</scope>
</reference>
<reference key="2">
    <citation type="journal article" date="2001" name="Mol. Endocrinol.">
        <title>The DEAD box protein DP103 is a regulator of steroidogenic factor-1.</title>
        <authorList>
            <person name="Ou Q."/>
            <person name="Mouillet J.F."/>
            <person name="Yan X."/>
            <person name="Dorn C."/>
            <person name="Crawford P.A."/>
            <person name="Sadovsky Y."/>
        </authorList>
    </citation>
    <scope>NUCLEOTIDE SEQUENCE [MRNA]</scope>
    <source>
        <strain>BALB/cJ</strain>
        <tissue>Testis</tissue>
    </source>
</reference>
<reference key="3">
    <citation type="submission" date="2005-09" db="EMBL/GenBank/DDBJ databases">
        <authorList>
            <person name="Mural R.J."/>
            <person name="Adams M.D."/>
            <person name="Myers E.W."/>
            <person name="Smith H.O."/>
            <person name="Venter J.C."/>
        </authorList>
    </citation>
    <scope>NUCLEOTIDE SEQUENCE [LARGE SCALE GENOMIC DNA]</scope>
</reference>
<reference key="4">
    <citation type="journal article" date="2004" name="Genome Res.">
        <title>The status, quality, and expansion of the NIH full-length cDNA project: the Mammalian Gene Collection (MGC).</title>
        <authorList>
            <consortium name="The MGC Project Team"/>
        </authorList>
    </citation>
    <scope>NUCLEOTIDE SEQUENCE [LARGE SCALE MRNA]</scope>
    <source>
        <tissue>Thymus</tissue>
    </source>
</reference>
<reference key="5">
    <citation type="journal article" date="2005" name="Biochem. Biophys. Res. Commun.">
        <title>Transcriptional factor FOXL2 interacts with DP103 and induces apoptosis.</title>
        <authorList>
            <person name="Lee K."/>
            <person name="Pisarska M.D."/>
            <person name="Ko J.J."/>
            <person name="Kang Y."/>
            <person name="Yoon S."/>
            <person name="Ryou S.M."/>
            <person name="Cha K.Y."/>
            <person name="Bae J."/>
        </authorList>
    </citation>
    <scope>INTERACTION WITH FOXL2</scope>
</reference>
<reference key="6">
    <citation type="journal article" date="2010" name="Cell">
        <title>A tissue-specific atlas of mouse protein phosphorylation and expression.</title>
        <authorList>
            <person name="Huttlin E.L."/>
            <person name="Jedrychowski M.P."/>
            <person name="Elias J.E."/>
            <person name="Goswami T."/>
            <person name="Rad R."/>
            <person name="Beausoleil S.A."/>
            <person name="Villen J."/>
            <person name="Haas W."/>
            <person name="Sowa M.E."/>
            <person name="Gygi S.P."/>
        </authorList>
    </citation>
    <scope>PHOSPHORYLATION [LARGE SCALE ANALYSIS] AT SER-472</scope>
    <scope>IDENTIFICATION BY MASS SPECTROMETRY [LARGE SCALE ANALYSIS]</scope>
    <source>
        <tissue>Pancreas</tissue>
        <tissue>Testis</tissue>
    </source>
</reference>
<sequence>MAAAAFEVPAALTTSESTMAAERAAAPVQAVEPTPASPWTQRTAHDIGGPRTRTGDVVLAEPADFESLLLSRPVLEGLRAAGFERPSPVQLKAIPLGRCGLDLIVQAKSGTGKTCVFSTIALDSLILENYSTQILILAPTREIAVQIHSVITAIGIKMEGLECHVFIGGTPLSQDKTRLKKCHIAVGSPGRIKQLIELDYLNPGSIRLFILDEADKLLEEGSFQEQINWIYSSLPASKQMLAVSATYPEVLANALTRYMRDPTFVRLNPSDPSLIGLKQYYQVVNSYPLAHKIFEEKTQHLQELFSKVPFNQALVFSNLHSRAQHLADILSSKGFPTECISGNMNQNQRLDAMAKLKQFHCRVLISTDLTSRGIDAEKVNLVVNLDVPLDWETYMHRIGRAGRFGTLGLTVTYCCRGEEENMMMKIAQKCNINLLPLPDPIPPGLMEECLNWDVEVKAAMHTYSSPTVATQSPKKQVQKLERAFQSQRTPGNQTPSPRNTSASALSARPKHSKPKLPVKSHSECGVLEKAAPPQESGCPAQLEEQVKNSVQTSVEDSSSNSQHQAKDSSPGSLPKIPCLSSFKVHQPSTLTFAELVDDYEHYIKEGLEKPVEIIRHYTGPEAQTGNPQNGFVRNRVSEDRAQMLVSSSQSGDSESDSDSCSSRTSSQSKGNKSYLEGSSDTQLKDTECTPVGGPLSLEQVQNGNDTPTQVEYQEAPETQVKARHKEGANQRSKQSRRNPARRSSYRVQSEPQEESWYDCHRETTASFSDTYQDYEEYWRAYYRAWQEYYAAASHSYYWNAQRHPSWMAAYHMNTVYLQEMMRGNQ</sequence>
<organism>
    <name type="scientific">Mus musculus</name>
    <name type="common">Mouse</name>
    <dbReference type="NCBI Taxonomy" id="10090"/>
    <lineage>
        <taxon>Eukaryota</taxon>
        <taxon>Metazoa</taxon>
        <taxon>Chordata</taxon>
        <taxon>Craniata</taxon>
        <taxon>Vertebrata</taxon>
        <taxon>Euteleostomi</taxon>
        <taxon>Mammalia</taxon>
        <taxon>Eutheria</taxon>
        <taxon>Euarchontoglires</taxon>
        <taxon>Glires</taxon>
        <taxon>Rodentia</taxon>
        <taxon>Myomorpha</taxon>
        <taxon>Muroidea</taxon>
        <taxon>Muridae</taxon>
        <taxon>Murinae</taxon>
        <taxon>Mus</taxon>
        <taxon>Mus</taxon>
    </lineage>
</organism>
<gene>
    <name type="primary">Ddx20</name>
    <name type="synonym">Dp103</name>
    <name type="synonym">Gemin3</name>
</gene>